<comment type="function">
    <text evidence="1">Catalyzes the transfer of the enolpyruvyl moiety of phosphoenolpyruvate (PEP) to the 5-hydroxyl of shikimate-3-phosphate (S3P) to produce enolpyruvyl shikimate-3-phosphate and inorganic phosphate.</text>
</comment>
<comment type="catalytic activity">
    <reaction evidence="1">
        <text>3-phosphoshikimate + phosphoenolpyruvate = 5-O-(1-carboxyvinyl)-3-phosphoshikimate + phosphate</text>
        <dbReference type="Rhea" id="RHEA:21256"/>
        <dbReference type="ChEBI" id="CHEBI:43474"/>
        <dbReference type="ChEBI" id="CHEBI:57701"/>
        <dbReference type="ChEBI" id="CHEBI:58702"/>
        <dbReference type="ChEBI" id="CHEBI:145989"/>
        <dbReference type="EC" id="2.5.1.19"/>
    </reaction>
    <physiologicalReaction direction="left-to-right" evidence="1">
        <dbReference type="Rhea" id="RHEA:21257"/>
    </physiologicalReaction>
</comment>
<comment type="pathway">
    <text evidence="1">Metabolic intermediate biosynthesis; chorismate biosynthesis; chorismate from D-erythrose 4-phosphate and phosphoenolpyruvate: step 6/7.</text>
</comment>
<comment type="subunit">
    <text evidence="1">Monomer.</text>
</comment>
<comment type="subcellular location">
    <subcellularLocation>
        <location evidence="1">Cytoplasm</location>
    </subcellularLocation>
</comment>
<comment type="similarity">
    <text evidence="1">Belongs to the EPSP synthase family.</text>
</comment>
<keyword id="KW-0028">Amino-acid biosynthesis</keyword>
<keyword id="KW-0057">Aromatic amino acid biosynthesis</keyword>
<keyword id="KW-0963">Cytoplasm</keyword>
<keyword id="KW-0808">Transferase</keyword>
<evidence type="ECO:0000255" key="1">
    <source>
        <dbReference type="HAMAP-Rule" id="MF_00210"/>
    </source>
</evidence>
<proteinExistence type="inferred from homology"/>
<dbReference type="EC" id="2.5.1.19" evidence="1"/>
<dbReference type="EMBL" id="CP001158">
    <property type="protein sequence ID" value="ACL30118.1"/>
    <property type="molecule type" value="Genomic_DNA"/>
</dbReference>
<dbReference type="RefSeq" id="WP_012619500.1">
    <property type="nucleotide sequence ID" value="NC_011834.1"/>
</dbReference>
<dbReference type="SMR" id="B8D7K3"/>
<dbReference type="KEGG" id="bau:BUAPTUC7_305"/>
<dbReference type="HOGENOM" id="CLU_024321_0_0_6"/>
<dbReference type="UniPathway" id="UPA00053">
    <property type="reaction ID" value="UER00089"/>
</dbReference>
<dbReference type="GO" id="GO:0005737">
    <property type="term" value="C:cytoplasm"/>
    <property type="evidence" value="ECO:0007669"/>
    <property type="project" value="UniProtKB-SubCell"/>
</dbReference>
<dbReference type="GO" id="GO:0003866">
    <property type="term" value="F:3-phosphoshikimate 1-carboxyvinyltransferase activity"/>
    <property type="evidence" value="ECO:0007669"/>
    <property type="project" value="UniProtKB-UniRule"/>
</dbReference>
<dbReference type="GO" id="GO:0008652">
    <property type="term" value="P:amino acid biosynthetic process"/>
    <property type="evidence" value="ECO:0007669"/>
    <property type="project" value="UniProtKB-KW"/>
</dbReference>
<dbReference type="GO" id="GO:0009073">
    <property type="term" value="P:aromatic amino acid family biosynthetic process"/>
    <property type="evidence" value="ECO:0007669"/>
    <property type="project" value="UniProtKB-KW"/>
</dbReference>
<dbReference type="GO" id="GO:0009423">
    <property type="term" value="P:chorismate biosynthetic process"/>
    <property type="evidence" value="ECO:0007669"/>
    <property type="project" value="UniProtKB-UniRule"/>
</dbReference>
<dbReference type="CDD" id="cd01556">
    <property type="entry name" value="EPSP_synthase"/>
    <property type="match status" value="1"/>
</dbReference>
<dbReference type="FunFam" id="3.65.10.10:FF:000003">
    <property type="entry name" value="3-phosphoshikimate 1-carboxyvinyltransferase"/>
    <property type="match status" value="1"/>
</dbReference>
<dbReference type="FunFam" id="3.65.10.10:FF:000004">
    <property type="entry name" value="3-phosphoshikimate 1-carboxyvinyltransferase"/>
    <property type="match status" value="1"/>
</dbReference>
<dbReference type="Gene3D" id="3.65.10.10">
    <property type="entry name" value="Enolpyruvate transferase domain"/>
    <property type="match status" value="2"/>
</dbReference>
<dbReference type="HAMAP" id="MF_00210">
    <property type="entry name" value="EPSP_synth"/>
    <property type="match status" value="1"/>
</dbReference>
<dbReference type="InterPro" id="IPR001986">
    <property type="entry name" value="Enolpyruvate_Tfrase_dom"/>
</dbReference>
<dbReference type="InterPro" id="IPR036968">
    <property type="entry name" value="Enolpyruvate_Tfrase_sf"/>
</dbReference>
<dbReference type="InterPro" id="IPR006264">
    <property type="entry name" value="EPSP_synthase"/>
</dbReference>
<dbReference type="InterPro" id="IPR023193">
    <property type="entry name" value="EPSP_synthase_CS"/>
</dbReference>
<dbReference type="InterPro" id="IPR013792">
    <property type="entry name" value="RNA3'P_cycl/enolpyr_Trfase_a/b"/>
</dbReference>
<dbReference type="NCBIfam" id="TIGR01356">
    <property type="entry name" value="aroA"/>
    <property type="match status" value="1"/>
</dbReference>
<dbReference type="PANTHER" id="PTHR21090">
    <property type="entry name" value="AROM/DEHYDROQUINATE SYNTHASE"/>
    <property type="match status" value="1"/>
</dbReference>
<dbReference type="PANTHER" id="PTHR21090:SF5">
    <property type="entry name" value="PENTAFUNCTIONAL AROM POLYPEPTIDE"/>
    <property type="match status" value="1"/>
</dbReference>
<dbReference type="Pfam" id="PF00275">
    <property type="entry name" value="EPSP_synthase"/>
    <property type="match status" value="1"/>
</dbReference>
<dbReference type="PIRSF" id="PIRSF000505">
    <property type="entry name" value="EPSPS"/>
    <property type="match status" value="1"/>
</dbReference>
<dbReference type="SUPFAM" id="SSF55205">
    <property type="entry name" value="EPT/RTPC-like"/>
    <property type="match status" value="1"/>
</dbReference>
<dbReference type="PROSITE" id="PS00104">
    <property type="entry name" value="EPSP_SYNTHASE_1"/>
    <property type="match status" value="1"/>
</dbReference>
<dbReference type="PROSITE" id="PS00885">
    <property type="entry name" value="EPSP_SYNTHASE_2"/>
    <property type="match status" value="1"/>
</dbReference>
<name>AROA_BUCAT</name>
<gene>
    <name evidence="1" type="primary">aroA</name>
    <name type="ordered locus">BUAPTUC7_305</name>
</gene>
<organism>
    <name type="scientific">Buchnera aphidicola subsp. Acyrthosiphon pisum (strain Tuc7)</name>
    <dbReference type="NCBI Taxonomy" id="561501"/>
    <lineage>
        <taxon>Bacteria</taxon>
        <taxon>Pseudomonadati</taxon>
        <taxon>Pseudomonadota</taxon>
        <taxon>Gammaproteobacteria</taxon>
        <taxon>Enterobacterales</taxon>
        <taxon>Erwiniaceae</taxon>
        <taxon>Buchnera</taxon>
    </lineage>
</organism>
<reference key="1">
    <citation type="journal article" date="2009" name="Science">
        <title>The dynamics and time scale of ongoing genomic erosion in symbiotic bacteria.</title>
        <authorList>
            <person name="Moran N.A."/>
            <person name="McLaughlin H.J."/>
            <person name="Sorek R."/>
        </authorList>
    </citation>
    <scope>NUCLEOTIDE SEQUENCE [LARGE SCALE GENOMIC DNA]</scope>
    <source>
        <strain>Tuc7</strain>
    </source>
</reference>
<sequence length="427" mass="46772">MQNSLDLKPISHVNGTVCLPGSKSISNRVLLLSSIAKGTTCLTNLLNSHDTQHMLNALKKLGVRYNLSDDKKTCHVQGIGGPFHLSEAISLYLGNAGTAIRPLLSVLSLHKNNILLNGDDRMHERPIGDLVDALIQGGAVIEYKKNKGYPPICTKGGFLGGSIFLNGNISSQFLTSLLISTPLALKDTTIFIKGNLVSKPYIDITLNLIKIFGVNIEHDSYNVFYIKGKQQYKTPGKYTIEGDASSASYFLAAAAIKGGSVKVTGVGKKSIQGDIEFANILEKMGATIFWEDYSITCTRNKLNAIDLDMNHIPDAAMTVAILALFSKGTTIIRNIYNWRVKETDRLSAMTIELRKIGAIVEEGRDFLSISPPIFFQYSSIETYNDHRMAMCFSLISLSGVGVNILNPNCISKTFPSYFKDFLSISKI</sequence>
<feature type="chain" id="PRO_1000124674" description="3-phosphoshikimate 1-carboxyvinyltransferase">
    <location>
        <begin position="1"/>
        <end position="427"/>
    </location>
</feature>
<feature type="active site" description="Proton acceptor" evidence="1">
    <location>
        <position position="314"/>
    </location>
</feature>
<feature type="binding site" evidence="1">
    <location>
        <position position="23"/>
    </location>
    <ligand>
        <name>3-phosphoshikimate</name>
        <dbReference type="ChEBI" id="CHEBI:145989"/>
    </ligand>
</feature>
<feature type="binding site" evidence="1">
    <location>
        <position position="23"/>
    </location>
    <ligand>
        <name>phosphoenolpyruvate</name>
        <dbReference type="ChEBI" id="CHEBI:58702"/>
    </ligand>
</feature>
<feature type="binding site" evidence="1">
    <location>
        <position position="24"/>
    </location>
    <ligand>
        <name>3-phosphoshikimate</name>
        <dbReference type="ChEBI" id="CHEBI:145989"/>
    </ligand>
</feature>
<feature type="binding site" evidence="1">
    <location>
        <position position="28"/>
    </location>
    <ligand>
        <name>3-phosphoshikimate</name>
        <dbReference type="ChEBI" id="CHEBI:145989"/>
    </ligand>
</feature>
<feature type="binding site" evidence="1">
    <location>
        <position position="97"/>
    </location>
    <ligand>
        <name>phosphoenolpyruvate</name>
        <dbReference type="ChEBI" id="CHEBI:58702"/>
    </ligand>
</feature>
<feature type="binding site" evidence="1">
    <location>
        <position position="125"/>
    </location>
    <ligand>
        <name>phosphoenolpyruvate</name>
        <dbReference type="ChEBI" id="CHEBI:58702"/>
    </ligand>
</feature>
<feature type="binding site" evidence="1">
    <location>
        <position position="170"/>
    </location>
    <ligand>
        <name>3-phosphoshikimate</name>
        <dbReference type="ChEBI" id="CHEBI:145989"/>
    </ligand>
</feature>
<feature type="binding site" evidence="1">
    <location>
        <position position="171"/>
    </location>
    <ligand>
        <name>3-phosphoshikimate</name>
        <dbReference type="ChEBI" id="CHEBI:145989"/>
    </ligand>
</feature>
<feature type="binding site" evidence="1">
    <location>
        <position position="172"/>
    </location>
    <ligand>
        <name>3-phosphoshikimate</name>
        <dbReference type="ChEBI" id="CHEBI:145989"/>
    </ligand>
</feature>
<feature type="binding site" evidence="1">
    <location>
        <position position="172"/>
    </location>
    <ligand>
        <name>phosphoenolpyruvate</name>
        <dbReference type="ChEBI" id="CHEBI:58702"/>
    </ligand>
</feature>
<feature type="binding site" evidence="1">
    <location>
        <position position="198"/>
    </location>
    <ligand>
        <name>3-phosphoshikimate</name>
        <dbReference type="ChEBI" id="CHEBI:145989"/>
    </ligand>
</feature>
<feature type="binding site" evidence="1">
    <location>
        <position position="314"/>
    </location>
    <ligand>
        <name>3-phosphoshikimate</name>
        <dbReference type="ChEBI" id="CHEBI:145989"/>
    </ligand>
</feature>
<feature type="binding site" evidence="1">
    <location>
        <position position="337"/>
    </location>
    <ligand>
        <name>3-phosphoshikimate</name>
        <dbReference type="ChEBI" id="CHEBI:145989"/>
    </ligand>
</feature>
<feature type="binding site" evidence="1">
    <location>
        <position position="341"/>
    </location>
    <ligand>
        <name>3-phosphoshikimate</name>
        <dbReference type="ChEBI" id="CHEBI:145989"/>
    </ligand>
</feature>
<feature type="binding site" evidence="1">
    <location>
        <position position="345"/>
    </location>
    <ligand>
        <name>phosphoenolpyruvate</name>
        <dbReference type="ChEBI" id="CHEBI:58702"/>
    </ligand>
</feature>
<feature type="binding site" evidence="1">
    <location>
        <position position="387"/>
    </location>
    <ligand>
        <name>phosphoenolpyruvate</name>
        <dbReference type="ChEBI" id="CHEBI:58702"/>
    </ligand>
</feature>
<feature type="binding site" evidence="1">
    <location>
        <position position="412"/>
    </location>
    <ligand>
        <name>phosphoenolpyruvate</name>
        <dbReference type="ChEBI" id="CHEBI:58702"/>
    </ligand>
</feature>
<accession>B8D7K3</accession>
<protein>
    <recommendedName>
        <fullName evidence="1">3-phosphoshikimate 1-carboxyvinyltransferase</fullName>
        <ecNumber evidence="1">2.5.1.19</ecNumber>
    </recommendedName>
    <alternativeName>
        <fullName evidence="1">5-enolpyruvylshikimate-3-phosphate synthase</fullName>
        <shortName evidence="1">EPSP synthase</shortName>
        <shortName evidence="1">EPSPS</shortName>
    </alternativeName>
</protein>